<proteinExistence type="evidence at transcript level"/>
<name>FBX7_BOVIN</name>
<gene>
    <name type="primary">FBXO7</name>
</gene>
<evidence type="ECO:0000250" key="1"/>
<evidence type="ECO:0000250" key="2">
    <source>
        <dbReference type="UniProtKB" id="Q3U7U3"/>
    </source>
</evidence>
<evidence type="ECO:0000250" key="3">
    <source>
        <dbReference type="UniProtKB" id="Q9Y3I1"/>
    </source>
</evidence>
<evidence type="ECO:0000255" key="4">
    <source>
        <dbReference type="PROSITE-ProRule" id="PRU00080"/>
    </source>
</evidence>
<evidence type="ECO:0000256" key="5">
    <source>
        <dbReference type="SAM" id="MobiDB-lite"/>
    </source>
</evidence>
<protein>
    <recommendedName>
        <fullName>F-box only protein 7</fullName>
    </recommendedName>
</protein>
<keyword id="KW-0963">Cytoplasm</keyword>
<keyword id="KW-0488">Methylation</keyword>
<keyword id="KW-0496">Mitochondrion</keyword>
<keyword id="KW-0539">Nucleus</keyword>
<keyword id="KW-1185">Reference proteome</keyword>
<keyword id="KW-0833">Ubl conjugation pathway</keyword>
<feature type="chain" id="PRO_0000284973" description="F-box only protein 7">
    <location>
        <begin position="1"/>
        <end position="522"/>
    </location>
</feature>
<feature type="domain" description="F-box" evidence="4">
    <location>
        <begin position="328"/>
        <end position="374"/>
    </location>
</feature>
<feature type="region of interest" description="Ubiquitin-like" evidence="1">
    <location>
        <begin position="1"/>
        <end position="87"/>
    </location>
</feature>
<feature type="region of interest" description="Disordered" evidence="5">
    <location>
        <begin position="88"/>
        <end position="151"/>
    </location>
</feature>
<feature type="region of interest" description="Important for interaction with PINK1" evidence="1">
    <location>
        <begin position="91"/>
        <end position="128"/>
    </location>
</feature>
<feature type="region of interest" description="Important for interaction with CDK6" evidence="1">
    <location>
        <begin position="128"/>
        <end position="168"/>
    </location>
</feature>
<feature type="region of interest" description="Important for dimerization and interaction with PSMF1" evidence="1">
    <location>
        <begin position="179"/>
        <end position="323"/>
    </location>
</feature>
<feature type="region of interest" description="Important for interaction with CDK6" evidence="1">
    <location>
        <begin position="380"/>
        <end position="522"/>
    </location>
</feature>
<feature type="region of interest" description="Disordered" evidence="5">
    <location>
        <begin position="484"/>
        <end position="522"/>
    </location>
</feature>
<feature type="short sequence motif" description="RFDP motif">
    <location>
        <begin position="481"/>
        <end position="484"/>
    </location>
</feature>
<feature type="compositionally biased region" description="Polar residues" evidence="5">
    <location>
        <begin position="88"/>
        <end position="132"/>
    </location>
</feature>
<feature type="modified residue" description="Omega-N-methylarginine" evidence="2">
    <location>
        <position position="431"/>
    </location>
</feature>
<feature type="modified residue" description="Omega-N-methylarginine" evidence="2">
    <location>
        <position position="451"/>
    </location>
</feature>
<feature type="modified residue" description="Asymmetric dimethylarginine" evidence="2">
    <location>
        <position position="518"/>
    </location>
</feature>
<accession>Q2T9S7</accession>
<sequence length="522" mass="57965">MKLRVRLQKRTWPLDMPEVEPTLGQLRAYLSQALPTWGYSSDARFAITLNNKDALTGDEETLASYGIVSGDLLCLILEDAIAAPNLPSSTVSEHSSVQNNDQPSLATSSSQSNIQDAQLHDSLQGQATQSEVWNDDSVSGPGQHFEAEAVPDVVDVEEGTGYYLAEPMLCSESVEGQVPHSLEILYQSADCLNPCDALIVSIHLLMLESGYIPQGTEAKAVSMPQNWRLGGVYKLQYTHPLCEGGSAALTCVPLGNLIVINATLKINSEVRSVKRLQLLPESFICKEESGENVAMIYKDLQKLSRLFKDQLVYPLLAFTRQALNLPDVFGLVVLPLELKLRIFRLLDVRSVLSLSAVCRDLCITSNDQLLWRCLYLRDFRDGSIRGRDTDWKELYKKRYKQRKEAQRGRHVMFLPSSPHPIPFYPSPLHPRPFPPSSLHPPGIIGGEYDQRLTLPYVGDPINSLIPGPGETPSQFPPLRPRFDPVGPLPGPNPILPGRGGPSDRFPLRPSRGWPTDSRLPFM</sequence>
<dbReference type="EMBL" id="BC111286">
    <property type="protein sequence ID" value="AAI11287.1"/>
    <property type="molecule type" value="mRNA"/>
</dbReference>
<dbReference type="RefSeq" id="NP_001033148.1">
    <property type="nucleotide sequence ID" value="NM_001038059.1"/>
</dbReference>
<dbReference type="SMR" id="Q2T9S7"/>
<dbReference type="FunCoup" id="Q2T9S7">
    <property type="interactions" value="2239"/>
</dbReference>
<dbReference type="STRING" id="9913.ENSBTAP00000027498"/>
<dbReference type="PaxDb" id="9913-ENSBTAP00000027498"/>
<dbReference type="GeneID" id="508235"/>
<dbReference type="KEGG" id="bta:508235"/>
<dbReference type="CTD" id="25793"/>
<dbReference type="eggNOG" id="ENOG502QTNJ">
    <property type="taxonomic scope" value="Eukaryota"/>
</dbReference>
<dbReference type="InParanoid" id="Q2T9S7"/>
<dbReference type="OrthoDB" id="101791at2759"/>
<dbReference type="UniPathway" id="UPA00143"/>
<dbReference type="Proteomes" id="UP000009136">
    <property type="component" value="Unplaced"/>
</dbReference>
<dbReference type="GO" id="GO:0005829">
    <property type="term" value="C:cytosol"/>
    <property type="evidence" value="ECO:0000250"/>
    <property type="project" value="UniProtKB"/>
</dbReference>
<dbReference type="GO" id="GO:0005739">
    <property type="term" value="C:mitochondrion"/>
    <property type="evidence" value="ECO:0000250"/>
    <property type="project" value="UniProtKB"/>
</dbReference>
<dbReference type="GO" id="GO:0005634">
    <property type="term" value="C:nucleus"/>
    <property type="evidence" value="ECO:0007669"/>
    <property type="project" value="UniProtKB-SubCell"/>
</dbReference>
<dbReference type="GO" id="GO:0000151">
    <property type="term" value="C:ubiquitin ligase complex"/>
    <property type="evidence" value="ECO:0000250"/>
    <property type="project" value="UniProtKB"/>
</dbReference>
<dbReference type="GO" id="GO:0019901">
    <property type="term" value="F:protein kinase binding"/>
    <property type="evidence" value="ECO:0000318"/>
    <property type="project" value="GO_Central"/>
</dbReference>
<dbReference type="GO" id="GO:0000422">
    <property type="term" value="P:autophagy of mitochondrion"/>
    <property type="evidence" value="ECO:0000250"/>
    <property type="project" value="UniProtKB"/>
</dbReference>
<dbReference type="GO" id="GO:1903599">
    <property type="term" value="P:positive regulation of autophagy of mitochondrion"/>
    <property type="evidence" value="ECO:0000318"/>
    <property type="project" value="GO_Central"/>
</dbReference>
<dbReference type="GO" id="GO:0006626">
    <property type="term" value="P:protein targeting to mitochondrion"/>
    <property type="evidence" value="ECO:0000250"/>
    <property type="project" value="UniProtKB"/>
</dbReference>
<dbReference type="GO" id="GO:0016567">
    <property type="term" value="P:protein ubiquitination"/>
    <property type="evidence" value="ECO:0000250"/>
    <property type="project" value="UniProtKB"/>
</dbReference>
<dbReference type="CDD" id="cd22087">
    <property type="entry name" value="F-box_FBXO7"/>
    <property type="match status" value="1"/>
</dbReference>
<dbReference type="FunFam" id="1.20.1280.50:FF:000010">
    <property type="entry name" value="F-box only protein 7"/>
    <property type="match status" value="1"/>
</dbReference>
<dbReference type="FunFam" id="3.40.1000.30:FF:000001">
    <property type="entry name" value="F-box only protein 7"/>
    <property type="match status" value="1"/>
</dbReference>
<dbReference type="Gene3D" id="1.20.1280.50">
    <property type="match status" value="1"/>
</dbReference>
<dbReference type="Gene3D" id="3.40.1000.30">
    <property type="match status" value="1"/>
</dbReference>
<dbReference type="InterPro" id="IPR036047">
    <property type="entry name" value="F-box-like_dom_sf"/>
</dbReference>
<dbReference type="InterPro" id="IPR001810">
    <property type="entry name" value="F-box_dom"/>
</dbReference>
<dbReference type="InterPro" id="IPR047118">
    <property type="entry name" value="Fbxo7"/>
</dbReference>
<dbReference type="InterPro" id="IPR021625">
    <property type="entry name" value="PI31_Prot_N"/>
</dbReference>
<dbReference type="PANTHER" id="PTHR15537">
    <property type="entry name" value="F-BOX ONLY PROTEIN 7"/>
    <property type="match status" value="1"/>
</dbReference>
<dbReference type="PANTHER" id="PTHR15537:SF2">
    <property type="entry name" value="F-BOX ONLY PROTEIN 7"/>
    <property type="match status" value="1"/>
</dbReference>
<dbReference type="Pfam" id="PF12937">
    <property type="entry name" value="F-box-like"/>
    <property type="match status" value="1"/>
</dbReference>
<dbReference type="Pfam" id="PF11566">
    <property type="entry name" value="PI31_Prot_N"/>
    <property type="match status" value="1"/>
</dbReference>
<dbReference type="SUPFAM" id="SSF81383">
    <property type="entry name" value="F-box domain"/>
    <property type="match status" value="1"/>
</dbReference>
<dbReference type="PROSITE" id="PS50181">
    <property type="entry name" value="FBOX"/>
    <property type="match status" value="1"/>
</dbReference>
<comment type="function">
    <text evidence="2 3">Substrate recognition component of a SCF (SKP1-CUL1-F-box protein) E3 ubiquitin-protein ligase complex which mediates the ubiquitination and subsequent proteasomal degradation of target proteins and plays a role in several biological processes such as cell cycle, cell proliferation, or maintenance of chromosome stability. Recognizes and ubiquitinates BIRC2 and the cell cycle regulator DLGAP5. Plays a role downstream of PINK1 in the clearance of damaged mitochondria via selective autophagy (mitophagy) by targeting PRKN to dysfunctional depolarized mitochondria. Promotes MFN1 ubiquitination. Mediates the ubiquitination and proteasomal degradation of UXT isoform 2, thereby impairing the NF-kappa-B signaling pathway. Inhibits NF-kappa-B pathway also by promoting the ubiquitinatioin of TRAF2 (By similarity). Affects the assembly state and activity of the proteasome in the cells including neurons by ubiquitinating the proteasomal subunit PSMA2 via 'Lys-63'-linked polyubiquitin chains (By similarity). Promotes 'Lys-48'-linked polyubiquitination SIRT7, leading to the hydrogen peroxide-induced cell death (By similarity).</text>
</comment>
<comment type="pathway">
    <text>Protein modification; protein ubiquitination.</text>
</comment>
<comment type="subunit">
    <text evidence="1">Part of the SCF (SKP1-CUL1-F-box) E3 ubiquitin-protein ligase complex SCF(FBXO7) formed of CUL1, SKP1, RBX1 and FBXO7. Interacts via its C-terminal proline-rich region with DLGAP5. Interacts with BIRC2. Interacts with CDK6 and promotes its interaction with D-type cyclin. Interacts (via the N-terminal Ubl domain) with PRKN. Interacts (via N-terminal region) with PINK1. Interacts with PSMF1 (By similarity).</text>
</comment>
<comment type="subcellular location">
    <subcellularLocation>
        <location evidence="1">Cytoplasm</location>
    </subcellularLocation>
    <subcellularLocation>
        <location evidence="1">Nucleus</location>
    </subcellularLocation>
    <subcellularLocation>
        <location evidence="1">Mitochondrion</location>
    </subcellularLocation>
    <subcellularLocation>
        <location evidence="1">Cytoplasm</location>
        <location evidence="1">Cytosol</location>
    </subcellularLocation>
    <text evidence="1">Predominantly cytoplasmic. A minor proportion is detected in the nucleus. Relocates from the cytosol to depolarized mitochondria (By similarity).</text>
</comment>
<comment type="domain">
    <text evidence="1">The ubiquitin-like region mediates interaction with PRKN.</text>
</comment>
<comment type="domain">
    <text evidence="1">The proline-rich region is important for protein-protein interactions.</text>
</comment>
<reference key="1">
    <citation type="submission" date="2005-12" db="EMBL/GenBank/DDBJ databases">
        <authorList>
            <consortium name="NIH - Mammalian Gene Collection (MGC) project"/>
        </authorList>
    </citation>
    <scope>NUCLEOTIDE SEQUENCE [LARGE SCALE MRNA]</scope>
    <source>
        <strain>Crossbred X Angus</strain>
        <tissue>Liver</tissue>
    </source>
</reference>
<organism>
    <name type="scientific">Bos taurus</name>
    <name type="common">Bovine</name>
    <dbReference type="NCBI Taxonomy" id="9913"/>
    <lineage>
        <taxon>Eukaryota</taxon>
        <taxon>Metazoa</taxon>
        <taxon>Chordata</taxon>
        <taxon>Craniata</taxon>
        <taxon>Vertebrata</taxon>
        <taxon>Euteleostomi</taxon>
        <taxon>Mammalia</taxon>
        <taxon>Eutheria</taxon>
        <taxon>Laurasiatheria</taxon>
        <taxon>Artiodactyla</taxon>
        <taxon>Ruminantia</taxon>
        <taxon>Pecora</taxon>
        <taxon>Bovidae</taxon>
        <taxon>Bovinae</taxon>
        <taxon>Bos</taxon>
    </lineage>
</organism>